<gene>
    <name type="primary">MT-CYB</name>
    <name type="synonym">COB</name>
    <name type="synonym">CYTB</name>
    <name type="synonym">MTCYB</name>
</gene>
<sequence length="379" mass="42655">MTNIRKTHPLLKIVNNAFIDLPAPSNISSWWNFGSLLGICLILQILTGLFLAMHYTADTTTAFSSVTHICRDVNYGWIIRYMHANGASMFFICLFMHVGRGLYYGSYTYTETWNIGVILLFATMATAFMGYVLPWGQMSFWGATVITNLLSAIPYIGTNLVEWIWGGFSVDKATLTRFFAFHFIFPFIIAALAMVHLLFLHETGSNNPTGISSDADKIPFHPYYTIKDILGALLLVLALMTLVLFSPDLLGDPDNYTPANPLNTPPHIKPEWYFLFAYAILRSIPNKLGGVLALVLSILILILMPLLHTSKQRSMMFRPISQCLFWILVADLLTLTWIGGQPVEHPYIIIGQLASIMYFLLILVLMPVASTIENNLLKW</sequence>
<name>CYB_LEUAD</name>
<evidence type="ECO:0000250" key="1"/>
<evidence type="ECO:0000250" key="2">
    <source>
        <dbReference type="UniProtKB" id="P00157"/>
    </source>
</evidence>
<evidence type="ECO:0000255" key="3">
    <source>
        <dbReference type="PROSITE-ProRule" id="PRU00967"/>
    </source>
</evidence>
<evidence type="ECO:0000255" key="4">
    <source>
        <dbReference type="PROSITE-ProRule" id="PRU00968"/>
    </source>
</evidence>
<geneLocation type="mitochondrion"/>
<organism>
    <name type="scientific">Leucocephalophus adersi</name>
    <name type="common">Aders' duiker</name>
    <name type="synonym">Cephalophus adersi</name>
    <dbReference type="NCBI Taxonomy" id="129222"/>
    <lineage>
        <taxon>Eukaryota</taxon>
        <taxon>Metazoa</taxon>
        <taxon>Chordata</taxon>
        <taxon>Craniata</taxon>
        <taxon>Vertebrata</taxon>
        <taxon>Euteleostomi</taxon>
        <taxon>Mammalia</taxon>
        <taxon>Eutheria</taxon>
        <taxon>Laurasiatheria</taxon>
        <taxon>Artiodactyla</taxon>
        <taxon>Ruminantia</taxon>
        <taxon>Pecora</taxon>
        <taxon>Bovidae</taxon>
        <taxon>Cephalophinae</taxon>
        <taxon>Leucocephalophus</taxon>
    </lineage>
</organism>
<reference key="1">
    <citation type="journal article" date="2001" name="Mol. Phylogenet. Evol.">
        <title>Retrieval of four adaptive lineages in duiker antelope: evidence from mitochondrial DNA sequences and fluorescence in situ hybridization.</title>
        <authorList>
            <person name="van Vuuren B.J."/>
            <person name="Robinson T.J."/>
        </authorList>
    </citation>
    <scope>NUCLEOTIDE SEQUENCE [GENOMIC DNA]</scope>
</reference>
<proteinExistence type="inferred from homology"/>
<feature type="chain" id="PRO_0000254668" description="Cytochrome b">
    <location>
        <begin position="1"/>
        <end position="379"/>
    </location>
</feature>
<feature type="transmembrane region" description="Helical" evidence="2">
    <location>
        <begin position="33"/>
        <end position="53"/>
    </location>
</feature>
<feature type="transmembrane region" description="Helical" evidence="2">
    <location>
        <begin position="77"/>
        <end position="98"/>
    </location>
</feature>
<feature type="transmembrane region" description="Helical" evidence="2">
    <location>
        <begin position="113"/>
        <end position="133"/>
    </location>
</feature>
<feature type="transmembrane region" description="Helical" evidence="2">
    <location>
        <begin position="178"/>
        <end position="198"/>
    </location>
</feature>
<feature type="transmembrane region" description="Helical" evidence="2">
    <location>
        <begin position="226"/>
        <end position="246"/>
    </location>
</feature>
<feature type="transmembrane region" description="Helical" evidence="2">
    <location>
        <begin position="288"/>
        <end position="308"/>
    </location>
</feature>
<feature type="transmembrane region" description="Helical" evidence="2">
    <location>
        <begin position="320"/>
        <end position="340"/>
    </location>
</feature>
<feature type="transmembrane region" description="Helical" evidence="2">
    <location>
        <begin position="347"/>
        <end position="367"/>
    </location>
</feature>
<feature type="binding site" description="axial binding residue" evidence="2">
    <location>
        <position position="83"/>
    </location>
    <ligand>
        <name>heme b</name>
        <dbReference type="ChEBI" id="CHEBI:60344"/>
        <label>b562</label>
    </ligand>
    <ligandPart>
        <name>Fe</name>
        <dbReference type="ChEBI" id="CHEBI:18248"/>
    </ligandPart>
</feature>
<feature type="binding site" description="axial binding residue" evidence="2">
    <location>
        <position position="97"/>
    </location>
    <ligand>
        <name>heme b</name>
        <dbReference type="ChEBI" id="CHEBI:60344"/>
        <label>b566</label>
    </ligand>
    <ligandPart>
        <name>Fe</name>
        <dbReference type="ChEBI" id="CHEBI:18248"/>
    </ligandPart>
</feature>
<feature type="binding site" description="axial binding residue" evidence="2">
    <location>
        <position position="182"/>
    </location>
    <ligand>
        <name>heme b</name>
        <dbReference type="ChEBI" id="CHEBI:60344"/>
        <label>b562</label>
    </ligand>
    <ligandPart>
        <name>Fe</name>
        <dbReference type="ChEBI" id="CHEBI:18248"/>
    </ligandPart>
</feature>
<feature type="binding site" description="axial binding residue" evidence="2">
    <location>
        <position position="196"/>
    </location>
    <ligand>
        <name>heme b</name>
        <dbReference type="ChEBI" id="CHEBI:60344"/>
        <label>b566</label>
    </ligand>
    <ligandPart>
        <name>Fe</name>
        <dbReference type="ChEBI" id="CHEBI:18248"/>
    </ligandPart>
</feature>
<feature type="binding site" evidence="2">
    <location>
        <position position="201"/>
    </location>
    <ligand>
        <name>a ubiquinone</name>
        <dbReference type="ChEBI" id="CHEBI:16389"/>
    </ligand>
</feature>
<accession>Q9B5S1</accession>
<keyword id="KW-0249">Electron transport</keyword>
<keyword id="KW-0349">Heme</keyword>
<keyword id="KW-0408">Iron</keyword>
<keyword id="KW-0472">Membrane</keyword>
<keyword id="KW-0479">Metal-binding</keyword>
<keyword id="KW-0496">Mitochondrion</keyword>
<keyword id="KW-0999">Mitochondrion inner membrane</keyword>
<keyword id="KW-0679">Respiratory chain</keyword>
<keyword id="KW-0812">Transmembrane</keyword>
<keyword id="KW-1133">Transmembrane helix</keyword>
<keyword id="KW-0813">Transport</keyword>
<keyword id="KW-0830">Ubiquinone</keyword>
<dbReference type="EMBL" id="AF153883">
    <property type="protein sequence ID" value="AAK26671.1"/>
    <property type="molecule type" value="Genomic_DNA"/>
</dbReference>
<dbReference type="SMR" id="Q9B5S1"/>
<dbReference type="GO" id="GO:0005743">
    <property type="term" value="C:mitochondrial inner membrane"/>
    <property type="evidence" value="ECO:0007669"/>
    <property type="project" value="UniProtKB-SubCell"/>
</dbReference>
<dbReference type="GO" id="GO:0045275">
    <property type="term" value="C:respiratory chain complex III"/>
    <property type="evidence" value="ECO:0007669"/>
    <property type="project" value="InterPro"/>
</dbReference>
<dbReference type="GO" id="GO:0046872">
    <property type="term" value="F:metal ion binding"/>
    <property type="evidence" value="ECO:0007669"/>
    <property type="project" value="UniProtKB-KW"/>
</dbReference>
<dbReference type="GO" id="GO:0008121">
    <property type="term" value="F:ubiquinol-cytochrome-c reductase activity"/>
    <property type="evidence" value="ECO:0007669"/>
    <property type="project" value="InterPro"/>
</dbReference>
<dbReference type="GO" id="GO:0006122">
    <property type="term" value="P:mitochondrial electron transport, ubiquinol to cytochrome c"/>
    <property type="evidence" value="ECO:0007669"/>
    <property type="project" value="TreeGrafter"/>
</dbReference>
<dbReference type="CDD" id="cd00290">
    <property type="entry name" value="cytochrome_b_C"/>
    <property type="match status" value="1"/>
</dbReference>
<dbReference type="CDD" id="cd00284">
    <property type="entry name" value="Cytochrome_b_N"/>
    <property type="match status" value="1"/>
</dbReference>
<dbReference type="FunFam" id="1.20.810.10:FF:000002">
    <property type="entry name" value="Cytochrome b"/>
    <property type="match status" value="1"/>
</dbReference>
<dbReference type="Gene3D" id="1.20.810.10">
    <property type="entry name" value="Cytochrome Bc1 Complex, Chain C"/>
    <property type="match status" value="1"/>
</dbReference>
<dbReference type="InterPro" id="IPR005798">
    <property type="entry name" value="Cyt_b/b6_C"/>
</dbReference>
<dbReference type="InterPro" id="IPR036150">
    <property type="entry name" value="Cyt_b/b6_C_sf"/>
</dbReference>
<dbReference type="InterPro" id="IPR005797">
    <property type="entry name" value="Cyt_b/b6_N"/>
</dbReference>
<dbReference type="InterPro" id="IPR027387">
    <property type="entry name" value="Cytb/b6-like_sf"/>
</dbReference>
<dbReference type="InterPro" id="IPR030689">
    <property type="entry name" value="Cytochrome_b"/>
</dbReference>
<dbReference type="InterPro" id="IPR048260">
    <property type="entry name" value="Cytochrome_b_C_euk/bac"/>
</dbReference>
<dbReference type="InterPro" id="IPR048259">
    <property type="entry name" value="Cytochrome_b_N_euk/bac"/>
</dbReference>
<dbReference type="InterPro" id="IPR016174">
    <property type="entry name" value="Di-haem_cyt_TM"/>
</dbReference>
<dbReference type="PANTHER" id="PTHR19271">
    <property type="entry name" value="CYTOCHROME B"/>
    <property type="match status" value="1"/>
</dbReference>
<dbReference type="PANTHER" id="PTHR19271:SF16">
    <property type="entry name" value="CYTOCHROME B"/>
    <property type="match status" value="1"/>
</dbReference>
<dbReference type="Pfam" id="PF00032">
    <property type="entry name" value="Cytochrom_B_C"/>
    <property type="match status" value="1"/>
</dbReference>
<dbReference type="Pfam" id="PF00033">
    <property type="entry name" value="Cytochrome_B"/>
    <property type="match status" value="1"/>
</dbReference>
<dbReference type="PIRSF" id="PIRSF038885">
    <property type="entry name" value="COB"/>
    <property type="match status" value="1"/>
</dbReference>
<dbReference type="SUPFAM" id="SSF81648">
    <property type="entry name" value="a domain/subunit of cytochrome bc1 complex (Ubiquinol-cytochrome c reductase)"/>
    <property type="match status" value="1"/>
</dbReference>
<dbReference type="SUPFAM" id="SSF81342">
    <property type="entry name" value="Transmembrane di-heme cytochromes"/>
    <property type="match status" value="1"/>
</dbReference>
<dbReference type="PROSITE" id="PS51003">
    <property type="entry name" value="CYTB_CTER"/>
    <property type="match status" value="1"/>
</dbReference>
<dbReference type="PROSITE" id="PS51002">
    <property type="entry name" value="CYTB_NTER"/>
    <property type="match status" value="1"/>
</dbReference>
<protein>
    <recommendedName>
        <fullName>Cytochrome b</fullName>
    </recommendedName>
    <alternativeName>
        <fullName>Complex III subunit 3</fullName>
    </alternativeName>
    <alternativeName>
        <fullName>Complex III subunit III</fullName>
    </alternativeName>
    <alternativeName>
        <fullName>Cytochrome b-c1 complex subunit 3</fullName>
    </alternativeName>
    <alternativeName>
        <fullName>Ubiquinol-cytochrome-c reductase complex cytochrome b subunit</fullName>
    </alternativeName>
</protein>
<comment type="function">
    <text evidence="2">Component of the ubiquinol-cytochrome c reductase complex (complex III or cytochrome b-c1 complex) that is part of the mitochondrial respiratory chain. The b-c1 complex mediates electron transfer from ubiquinol to cytochrome c. Contributes to the generation of a proton gradient across the mitochondrial membrane that is then used for ATP synthesis.</text>
</comment>
<comment type="cofactor">
    <cofactor evidence="2">
        <name>heme b</name>
        <dbReference type="ChEBI" id="CHEBI:60344"/>
    </cofactor>
    <text evidence="2">Binds 2 heme b groups non-covalently.</text>
</comment>
<comment type="subunit">
    <text evidence="2">The cytochrome bc1 complex contains 11 subunits: 3 respiratory subunits (MT-CYB, CYC1 and UQCRFS1), 2 core proteins (UQCRC1 and UQCRC2) and 6 low-molecular weight proteins (UQCRH/QCR6, UQCRB/QCR7, UQCRQ/QCR8, UQCR10/QCR9, UQCR11/QCR10 and a cleavage product of UQCRFS1). This cytochrome bc1 complex then forms a dimer.</text>
</comment>
<comment type="subcellular location">
    <subcellularLocation>
        <location evidence="2">Mitochondrion inner membrane</location>
        <topology evidence="2">Multi-pass membrane protein</topology>
    </subcellularLocation>
</comment>
<comment type="miscellaneous">
    <text evidence="1">Heme 1 (or BL or b562) is low-potential and absorbs at about 562 nm, and heme 2 (or BH or b566) is high-potential and absorbs at about 566 nm.</text>
</comment>
<comment type="similarity">
    <text evidence="3 4">Belongs to the cytochrome b family.</text>
</comment>
<comment type="caution">
    <text evidence="2">The full-length protein contains only eight transmembrane helices, not nine as predicted by bioinformatics tools.</text>
</comment>